<reference key="1">
    <citation type="journal article" date="2009" name="Nat. Med.">
        <title>MACC1, a newly identified key regulator of HGF-MET signaling, predicts colon cancer metastasis.</title>
        <authorList>
            <person name="Stein U."/>
            <person name="Walther W."/>
            <person name="Arlt F."/>
            <person name="Schwabe H."/>
            <person name="Smith J."/>
            <person name="Fichtner I."/>
            <person name="Birchmeier W."/>
            <person name="Schlag P.M."/>
        </authorList>
    </citation>
    <scope>NUCLEOTIDE SEQUENCE [MRNA]</scope>
    <scope>FUNCTION</scope>
    <scope>SUBCELLULAR LOCATION</scope>
    <scope>TISSUE SPECIFICITY</scope>
    <source>
        <tissue>Colon carcinoma</tissue>
        <tissue>Trachea</tissue>
    </source>
</reference>
<reference key="2">
    <citation type="journal article" date="2004" name="Nat. Genet.">
        <title>Complete sequencing and characterization of 21,243 full-length human cDNAs.</title>
        <authorList>
            <person name="Ota T."/>
            <person name="Suzuki Y."/>
            <person name="Nishikawa T."/>
            <person name="Otsuki T."/>
            <person name="Sugiyama T."/>
            <person name="Irie R."/>
            <person name="Wakamatsu A."/>
            <person name="Hayashi K."/>
            <person name="Sato H."/>
            <person name="Nagai K."/>
            <person name="Kimura K."/>
            <person name="Makita H."/>
            <person name="Sekine M."/>
            <person name="Obayashi M."/>
            <person name="Nishi T."/>
            <person name="Shibahara T."/>
            <person name="Tanaka T."/>
            <person name="Ishii S."/>
            <person name="Yamamoto J."/>
            <person name="Saito K."/>
            <person name="Kawai Y."/>
            <person name="Isono Y."/>
            <person name="Nakamura Y."/>
            <person name="Nagahari K."/>
            <person name="Murakami K."/>
            <person name="Yasuda T."/>
            <person name="Iwayanagi T."/>
            <person name="Wagatsuma M."/>
            <person name="Shiratori A."/>
            <person name="Sudo H."/>
            <person name="Hosoiri T."/>
            <person name="Kaku Y."/>
            <person name="Kodaira H."/>
            <person name="Kondo H."/>
            <person name="Sugawara M."/>
            <person name="Takahashi M."/>
            <person name="Kanda K."/>
            <person name="Yokoi T."/>
            <person name="Furuya T."/>
            <person name="Kikkawa E."/>
            <person name="Omura Y."/>
            <person name="Abe K."/>
            <person name="Kamihara K."/>
            <person name="Katsuta N."/>
            <person name="Sato K."/>
            <person name="Tanikawa M."/>
            <person name="Yamazaki M."/>
            <person name="Ninomiya K."/>
            <person name="Ishibashi T."/>
            <person name="Yamashita H."/>
            <person name="Murakawa K."/>
            <person name="Fujimori K."/>
            <person name="Tanai H."/>
            <person name="Kimata M."/>
            <person name="Watanabe M."/>
            <person name="Hiraoka S."/>
            <person name="Chiba Y."/>
            <person name="Ishida S."/>
            <person name="Ono Y."/>
            <person name="Takiguchi S."/>
            <person name="Watanabe S."/>
            <person name="Yosida M."/>
            <person name="Hotuta T."/>
            <person name="Kusano J."/>
            <person name="Kanehori K."/>
            <person name="Takahashi-Fujii A."/>
            <person name="Hara H."/>
            <person name="Tanase T.-O."/>
            <person name="Nomura Y."/>
            <person name="Togiya S."/>
            <person name="Komai F."/>
            <person name="Hara R."/>
            <person name="Takeuchi K."/>
            <person name="Arita M."/>
            <person name="Imose N."/>
            <person name="Musashino K."/>
            <person name="Yuuki H."/>
            <person name="Oshima A."/>
            <person name="Sasaki N."/>
            <person name="Aotsuka S."/>
            <person name="Yoshikawa Y."/>
            <person name="Matsunawa H."/>
            <person name="Ichihara T."/>
            <person name="Shiohata N."/>
            <person name="Sano S."/>
            <person name="Moriya S."/>
            <person name="Momiyama H."/>
            <person name="Satoh N."/>
            <person name="Takami S."/>
            <person name="Terashima Y."/>
            <person name="Suzuki O."/>
            <person name="Nakagawa S."/>
            <person name="Senoh A."/>
            <person name="Mizoguchi H."/>
            <person name="Goto Y."/>
            <person name="Shimizu F."/>
            <person name="Wakebe H."/>
            <person name="Hishigaki H."/>
            <person name="Watanabe T."/>
            <person name="Sugiyama A."/>
            <person name="Takemoto M."/>
            <person name="Kawakami B."/>
            <person name="Yamazaki M."/>
            <person name="Watanabe K."/>
            <person name="Kumagai A."/>
            <person name="Itakura S."/>
            <person name="Fukuzumi Y."/>
            <person name="Fujimori Y."/>
            <person name="Komiyama M."/>
            <person name="Tashiro H."/>
            <person name="Tanigami A."/>
            <person name="Fujiwara T."/>
            <person name="Ono T."/>
            <person name="Yamada K."/>
            <person name="Fujii Y."/>
            <person name="Ozaki K."/>
            <person name="Hirao M."/>
            <person name="Ohmori Y."/>
            <person name="Kawabata A."/>
            <person name="Hikiji T."/>
            <person name="Kobatake N."/>
            <person name="Inagaki H."/>
            <person name="Ikema Y."/>
            <person name="Okamoto S."/>
            <person name="Okitani R."/>
            <person name="Kawakami T."/>
            <person name="Noguchi S."/>
            <person name="Itoh T."/>
            <person name="Shigeta K."/>
            <person name="Senba T."/>
            <person name="Matsumura K."/>
            <person name="Nakajima Y."/>
            <person name="Mizuno T."/>
            <person name="Morinaga M."/>
            <person name="Sasaki M."/>
            <person name="Togashi T."/>
            <person name="Oyama M."/>
            <person name="Hata H."/>
            <person name="Watanabe M."/>
            <person name="Komatsu T."/>
            <person name="Mizushima-Sugano J."/>
            <person name="Satoh T."/>
            <person name="Shirai Y."/>
            <person name="Takahashi Y."/>
            <person name="Nakagawa K."/>
            <person name="Okumura K."/>
            <person name="Nagase T."/>
            <person name="Nomura N."/>
            <person name="Kikuchi H."/>
            <person name="Masuho Y."/>
            <person name="Yamashita R."/>
            <person name="Nakai K."/>
            <person name="Yada T."/>
            <person name="Nakamura Y."/>
            <person name="Ohara O."/>
            <person name="Isogai T."/>
            <person name="Sugano S."/>
        </authorList>
    </citation>
    <scope>NUCLEOTIDE SEQUENCE [LARGE SCALE MRNA]</scope>
    <scope>VARIANTS VAL-31; LEU-515 AND THR-804</scope>
    <source>
        <tissue>Tongue</tissue>
    </source>
</reference>
<reference key="3">
    <citation type="journal article" date="2003" name="Science">
        <title>Human chromosome 7: DNA sequence and biology.</title>
        <authorList>
            <person name="Scherer S.W."/>
            <person name="Cheung J."/>
            <person name="MacDonald J.R."/>
            <person name="Osborne L.R."/>
            <person name="Nakabayashi K."/>
            <person name="Herbrick J.-A."/>
            <person name="Carson A.R."/>
            <person name="Parker-Katiraee L."/>
            <person name="Skaug J."/>
            <person name="Khaja R."/>
            <person name="Zhang J."/>
            <person name="Hudek A.K."/>
            <person name="Li M."/>
            <person name="Haddad M."/>
            <person name="Duggan G.E."/>
            <person name="Fernandez B.A."/>
            <person name="Kanematsu E."/>
            <person name="Gentles S."/>
            <person name="Christopoulos C.C."/>
            <person name="Choufani S."/>
            <person name="Kwasnicka D."/>
            <person name="Zheng X.H."/>
            <person name="Lai Z."/>
            <person name="Nusskern D.R."/>
            <person name="Zhang Q."/>
            <person name="Gu Z."/>
            <person name="Lu F."/>
            <person name="Zeesman S."/>
            <person name="Nowaczyk M.J."/>
            <person name="Teshima I."/>
            <person name="Chitayat D."/>
            <person name="Shuman C."/>
            <person name="Weksberg R."/>
            <person name="Zackai E.H."/>
            <person name="Grebe T.A."/>
            <person name="Cox S.R."/>
            <person name="Kirkpatrick S.J."/>
            <person name="Rahman N."/>
            <person name="Friedman J.M."/>
            <person name="Heng H.H.Q."/>
            <person name="Pelicci P.G."/>
            <person name="Lo-Coco F."/>
            <person name="Belloni E."/>
            <person name="Shaffer L.G."/>
            <person name="Pober B."/>
            <person name="Morton C.C."/>
            <person name="Gusella J.F."/>
            <person name="Bruns G.A.P."/>
            <person name="Korf B.R."/>
            <person name="Quade B.J."/>
            <person name="Ligon A.H."/>
            <person name="Ferguson H."/>
            <person name="Higgins A.W."/>
            <person name="Leach N.T."/>
            <person name="Herrick S.R."/>
            <person name="Lemyre E."/>
            <person name="Farra C.G."/>
            <person name="Kim H.-G."/>
            <person name="Summers A.M."/>
            <person name="Gripp K.W."/>
            <person name="Roberts W."/>
            <person name="Szatmari P."/>
            <person name="Winsor E.J.T."/>
            <person name="Grzeschik K.-H."/>
            <person name="Teebi A."/>
            <person name="Minassian B.A."/>
            <person name="Kere J."/>
            <person name="Armengol L."/>
            <person name="Pujana M.A."/>
            <person name="Estivill X."/>
            <person name="Wilson M.D."/>
            <person name="Koop B.F."/>
            <person name="Tosi S."/>
            <person name="Moore G.E."/>
            <person name="Boright A.P."/>
            <person name="Zlotorynski E."/>
            <person name="Kerem B."/>
            <person name="Kroisel P.M."/>
            <person name="Petek E."/>
            <person name="Oscier D.G."/>
            <person name="Mould S.J."/>
            <person name="Doehner H."/>
            <person name="Doehner K."/>
            <person name="Rommens J.M."/>
            <person name="Vincent J.B."/>
            <person name="Venter J.C."/>
            <person name="Li P.W."/>
            <person name="Mural R.J."/>
            <person name="Adams M.D."/>
            <person name="Tsui L.-C."/>
        </authorList>
    </citation>
    <scope>NUCLEOTIDE SEQUENCE [LARGE SCALE GENOMIC DNA]</scope>
</reference>
<reference key="4">
    <citation type="journal article" date="2003" name="Nature">
        <title>The DNA sequence of human chromosome 7.</title>
        <authorList>
            <person name="Hillier L.W."/>
            <person name="Fulton R.S."/>
            <person name="Fulton L.A."/>
            <person name="Graves T.A."/>
            <person name="Pepin K.H."/>
            <person name="Wagner-McPherson C."/>
            <person name="Layman D."/>
            <person name="Maas J."/>
            <person name="Jaeger S."/>
            <person name="Walker R."/>
            <person name="Wylie K."/>
            <person name="Sekhon M."/>
            <person name="Becker M.C."/>
            <person name="O'Laughlin M.D."/>
            <person name="Schaller M.E."/>
            <person name="Fewell G.A."/>
            <person name="Delehaunty K.D."/>
            <person name="Miner T.L."/>
            <person name="Nash W.E."/>
            <person name="Cordes M."/>
            <person name="Du H."/>
            <person name="Sun H."/>
            <person name="Edwards J."/>
            <person name="Bradshaw-Cordum H."/>
            <person name="Ali J."/>
            <person name="Andrews S."/>
            <person name="Isak A."/>
            <person name="Vanbrunt A."/>
            <person name="Nguyen C."/>
            <person name="Du F."/>
            <person name="Lamar B."/>
            <person name="Courtney L."/>
            <person name="Kalicki J."/>
            <person name="Ozersky P."/>
            <person name="Bielicki L."/>
            <person name="Scott K."/>
            <person name="Holmes A."/>
            <person name="Harkins R."/>
            <person name="Harris A."/>
            <person name="Strong C.M."/>
            <person name="Hou S."/>
            <person name="Tomlinson C."/>
            <person name="Dauphin-Kohlberg S."/>
            <person name="Kozlowicz-Reilly A."/>
            <person name="Leonard S."/>
            <person name="Rohlfing T."/>
            <person name="Rock S.M."/>
            <person name="Tin-Wollam A.-M."/>
            <person name="Abbott A."/>
            <person name="Minx P."/>
            <person name="Maupin R."/>
            <person name="Strowmatt C."/>
            <person name="Latreille P."/>
            <person name="Miller N."/>
            <person name="Johnson D."/>
            <person name="Murray J."/>
            <person name="Woessner J.P."/>
            <person name="Wendl M.C."/>
            <person name="Yang S.-P."/>
            <person name="Schultz B.R."/>
            <person name="Wallis J.W."/>
            <person name="Spieth J."/>
            <person name="Bieri T.A."/>
            <person name="Nelson J.O."/>
            <person name="Berkowicz N."/>
            <person name="Wohldmann P.E."/>
            <person name="Cook L.L."/>
            <person name="Hickenbotham M.T."/>
            <person name="Eldred J."/>
            <person name="Williams D."/>
            <person name="Bedell J.A."/>
            <person name="Mardis E.R."/>
            <person name="Clifton S.W."/>
            <person name="Chissoe S.L."/>
            <person name="Marra M.A."/>
            <person name="Raymond C."/>
            <person name="Haugen E."/>
            <person name="Gillett W."/>
            <person name="Zhou Y."/>
            <person name="James R."/>
            <person name="Phelps K."/>
            <person name="Iadanoto S."/>
            <person name="Bubb K."/>
            <person name="Simms E."/>
            <person name="Levy R."/>
            <person name="Clendenning J."/>
            <person name="Kaul R."/>
            <person name="Kent W.J."/>
            <person name="Furey T.S."/>
            <person name="Baertsch R.A."/>
            <person name="Brent M.R."/>
            <person name="Keibler E."/>
            <person name="Flicek P."/>
            <person name="Bork P."/>
            <person name="Suyama M."/>
            <person name="Bailey J.A."/>
            <person name="Portnoy M.E."/>
            <person name="Torrents D."/>
            <person name="Chinwalla A.T."/>
            <person name="Gish W.R."/>
            <person name="Eddy S.R."/>
            <person name="McPherson J.D."/>
            <person name="Olson M.V."/>
            <person name="Eichler E.E."/>
            <person name="Green E.D."/>
            <person name="Waterston R.H."/>
            <person name="Wilson R.K."/>
        </authorList>
    </citation>
    <scope>NUCLEOTIDE SEQUENCE [LARGE SCALE GENOMIC DNA]</scope>
</reference>
<reference key="5">
    <citation type="submission" date="2005-07" db="EMBL/GenBank/DDBJ databases">
        <authorList>
            <person name="Mural R.J."/>
            <person name="Istrail S."/>
            <person name="Sutton G.G."/>
            <person name="Florea L."/>
            <person name="Halpern A.L."/>
            <person name="Mobarry C.M."/>
            <person name="Lippert R."/>
            <person name="Walenz B."/>
            <person name="Shatkay H."/>
            <person name="Dew I."/>
            <person name="Miller J.R."/>
            <person name="Flanigan M.J."/>
            <person name="Edwards N.J."/>
            <person name="Bolanos R."/>
            <person name="Fasulo D."/>
            <person name="Halldorsson B.V."/>
            <person name="Hannenhalli S."/>
            <person name="Turner R."/>
            <person name="Yooseph S."/>
            <person name="Lu F."/>
            <person name="Nusskern D.R."/>
            <person name="Shue B.C."/>
            <person name="Zheng X.H."/>
            <person name="Zhong F."/>
            <person name="Delcher A.L."/>
            <person name="Huson D.H."/>
            <person name="Kravitz S.A."/>
            <person name="Mouchard L."/>
            <person name="Reinert K."/>
            <person name="Remington K.A."/>
            <person name="Clark A.G."/>
            <person name="Waterman M.S."/>
            <person name="Eichler E.E."/>
            <person name="Adams M.D."/>
            <person name="Hunkapiller M.W."/>
            <person name="Myers E.W."/>
            <person name="Venter J.C."/>
        </authorList>
    </citation>
    <scope>NUCLEOTIDE SEQUENCE [LARGE SCALE GENOMIC DNA]</scope>
</reference>
<reference key="6">
    <citation type="journal article" date="2004" name="Genome Res.">
        <title>The status, quality, and expansion of the NIH full-length cDNA project: the Mammalian Gene Collection (MGC).</title>
        <authorList>
            <consortium name="The MGC Project Team"/>
        </authorList>
    </citation>
    <scope>NUCLEOTIDE SEQUENCE [LARGE SCALE MRNA]</scope>
    <source>
        <tissue>Lung</tissue>
    </source>
</reference>
<reference key="7">
    <citation type="journal article" date="2009" name="BMC Immunol.">
        <title>Identification of SH3 domain interaction partners of human FasL (CD178) by phage display screening.</title>
        <authorList>
            <person name="Voss M."/>
            <person name="Lettau M."/>
            <person name="Janssen O."/>
        </authorList>
    </citation>
    <scope>INTERACTION WITH FASLG</scope>
</reference>
<reference key="8">
    <citation type="journal article" date="2013" name="J. Proteome Res.">
        <title>Toward a comprehensive characterization of a human cancer cell phosphoproteome.</title>
        <authorList>
            <person name="Zhou H."/>
            <person name="Di Palma S."/>
            <person name="Preisinger C."/>
            <person name="Peng M."/>
            <person name="Polat A.N."/>
            <person name="Heck A.J."/>
            <person name="Mohammed S."/>
        </authorList>
    </citation>
    <scope>PHOSPHORYLATION [LARGE SCALE ANALYSIS] AT SER-19</scope>
    <scope>IDENTIFICATION BY MASS SPECTROMETRY [LARGE SCALE ANALYSIS]</scope>
    <source>
        <tissue>Erythroleukemia</tissue>
    </source>
</reference>
<evidence type="ECO:0000255" key="1">
    <source>
        <dbReference type="PROSITE-ProRule" id="PRU00192"/>
    </source>
</evidence>
<evidence type="ECO:0000255" key="2">
    <source>
        <dbReference type="PROSITE-ProRule" id="PRU00485"/>
    </source>
</evidence>
<evidence type="ECO:0000269" key="3">
    <source>
    </source>
</evidence>
<evidence type="ECO:0000269" key="4">
    <source>
    </source>
</evidence>
<evidence type="ECO:0000269" key="5">
    <source>
    </source>
</evidence>
<evidence type="ECO:0000305" key="6"/>
<evidence type="ECO:0007744" key="7">
    <source>
    </source>
</evidence>
<comment type="function">
    <text evidence="4">Acts as a transcription activator for MET and as a key regulator of HGF-MET signaling. Promotes cell motility, proliferation and hepatocyte growth factor (HGF)-dependent scattering in vitro and tumor growth and metastasis in vivo.</text>
</comment>
<comment type="subunit">
    <text evidence="5">Interacts with FASLG.</text>
</comment>
<comment type="subcellular location">
    <subcellularLocation>
        <location evidence="4">Cytoplasm</location>
    </subcellularLocation>
    <subcellularLocation>
        <location evidence="4">Nucleus</location>
    </subcellularLocation>
    <text>Mainly found in the cytoplasm in non-metastasizing tumors.</text>
</comment>
<comment type="tissue specificity">
    <text evidence="4">Preferentially expressed in metastasizing tumors.</text>
</comment>
<comment type="sequence caution" evidence="6">
    <conflict type="erroneous initiation">
        <sequence resource="EMBL-CDS" id="BAC87646"/>
    </conflict>
</comment>
<comment type="sequence caution" evidence="6">
    <conflict type="erroneous gene model prediction">
        <sequence resource="EMBL-CDS" id="EAW93719"/>
    </conflict>
</comment>
<organism>
    <name type="scientific">Homo sapiens</name>
    <name type="common">Human</name>
    <dbReference type="NCBI Taxonomy" id="9606"/>
    <lineage>
        <taxon>Eukaryota</taxon>
        <taxon>Metazoa</taxon>
        <taxon>Chordata</taxon>
        <taxon>Craniata</taxon>
        <taxon>Vertebrata</taxon>
        <taxon>Euteleostomi</taxon>
        <taxon>Mammalia</taxon>
        <taxon>Eutheria</taxon>
        <taxon>Euarchontoglires</taxon>
        <taxon>Primates</taxon>
        <taxon>Haplorrhini</taxon>
        <taxon>Catarrhini</taxon>
        <taxon>Hominidae</taxon>
        <taxon>Homo</taxon>
    </lineage>
</organism>
<keyword id="KW-0010">Activator</keyword>
<keyword id="KW-0963">Cytoplasm</keyword>
<keyword id="KW-0339">Growth factor</keyword>
<keyword id="KW-0497">Mitogen</keyword>
<keyword id="KW-0539">Nucleus</keyword>
<keyword id="KW-0597">Phosphoprotein</keyword>
<keyword id="KW-1267">Proteomics identification</keyword>
<keyword id="KW-1185">Reference proteome</keyword>
<keyword id="KW-0728">SH3 domain</keyword>
<keyword id="KW-0804">Transcription</keyword>
<keyword id="KW-0805">Transcription regulation</keyword>
<gene>
    <name type="primary">MACC1</name>
</gene>
<sequence>MLITERKHFRSGRIAQSMSEANLIDMEAGKLSKSCNITECQDPDLLHNWPDAFTLRGNNASKVANPFWNQLSASNPFLDDITQLRNNRKRNNISILKEDPFLFCREIENGNSFDSSGDELDVHQLLRQTSSRNSGRSKSVSELLDILDDTAHAHQSIHNSDQILLHDLEWLKNDREAYKMAWLSQRQLARSCLDLNTISQSPGWAQTQLAEVTIACKVNHQGGSVQLPESDITVHVPQGHVAVGEFQEVSLRAFLDPPHMLNHDLSCTVSPLLEIMLGNLNTMEALLLEMKIGAEVRKDPFSQVMTEMVCLHSLGKEGPFKVLSNCYIYKDTIQVKLIDLSQVMYLVVAAQAKALPSPAATIWDYIHKTTSIGIYGPKYIHPSFTVVLTVCGHNYMPGQLTISDIKKGGKNISPVVFQLWGKQSFLLDKPQDLSISIFSCDPDFEVKTEGERKEIKQKQLEAGEVVHQQFLFSLVEHREMHLFDFCVQVEPPNGEPVAQFSITTPDPTPNLKRLSNLPGYLQKKEEIKSAPLSPKILVKYPTFQDKTLNFSNYGVTLKAVLRQSKIDYFLEYFKGDTIALLGEGKVKAIGQSKVKEWYVGVLRGKIGLVHCKNVKVISKEQVMFMSDSVFTTRNLLEQIVLPLKKLTYIYSVVLTLVSEKVYDWKVLADVLGYSHLSLEDFDQIQADKESEKVSYVIKKLKEDCHTERNTRKFLYELIVALLKMDCQELVARLIQEAAVLTSAVKLGKGWRELAEKLVRLTKQQMEAYEIPHRGNTGDVAVEMMWKPAYDFLYTWSAHYGNNYRDVLQDLQSALDRMKNPVTKHWRELTGVLILVNSLEVLRVTAFSTSEEV</sequence>
<protein>
    <recommendedName>
        <fullName>Metastasis-associated in colon cancer protein 1</fullName>
    </recommendedName>
    <alternativeName>
        <fullName>SH3 domain-containing protein 7a5</fullName>
    </alternativeName>
</protein>
<name>MACC1_HUMAN</name>
<feature type="chain" id="PRO_0000329032" description="Metastasis-associated in colon cancer protein 1">
    <location>
        <begin position="1"/>
        <end position="852"/>
    </location>
</feature>
<feature type="domain" description="ZU5" evidence="2">
    <location>
        <begin position="212"/>
        <end position="349"/>
    </location>
</feature>
<feature type="domain" description="SH3" evidence="1">
    <location>
        <begin position="549"/>
        <end position="619"/>
    </location>
</feature>
<feature type="modified residue" description="Phosphoserine" evidence="7">
    <location>
        <position position="19"/>
    </location>
</feature>
<feature type="sequence variant" id="VAR_042620" description="In dbSNP:rs4721888." evidence="3">
    <original>L</original>
    <variation>V</variation>
    <location>
        <position position="31"/>
    </location>
</feature>
<feature type="sequence variant" id="VAR_042621" description="In dbSNP:rs17142503.">
    <original>P</original>
    <variation>L</variation>
    <location>
        <position position="50"/>
    </location>
</feature>
<feature type="sequence variant" id="VAR_042622" description="In dbSNP:rs975263." evidence="3">
    <original>S</original>
    <variation>L</variation>
    <location>
        <position position="515"/>
    </location>
</feature>
<feature type="sequence variant" id="VAR_042623" description="In dbSNP:rs12671170.">
    <original>E</original>
    <variation>A</variation>
    <location>
        <position position="728"/>
    </location>
</feature>
<feature type="sequence variant" id="VAR_042624" description="In dbSNP:rs3735615." evidence="3">
    <original>R</original>
    <variation>T</variation>
    <location>
        <position position="804"/>
    </location>
</feature>
<feature type="sequence conflict" description="In Ref. 2; BAD18547." evidence="6" ref="2">
    <original>L</original>
    <variation>P</variation>
    <location>
        <position position="171"/>
    </location>
</feature>
<feature type="sequence conflict" description="In Ref. 2; BAD18547." evidence="6" ref="2">
    <original>D</original>
    <variation>N</variation>
    <location>
        <position position="264"/>
    </location>
</feature>
<feature type="sequence conflict" description="In Ref. 2; BAD18547." evidence="6" ref="2">
    <original>S</original>
    <variation>N</variation>
    <location>
        <position position="383"/>
    </location>
</feature>
<proteinExistence type="evidence at protein level"/>
<accession>Q6ZN28</accession>
<accession>A8MUS5</accession>
<accession>B2RNR9</accession>
<accession>Q6ZQN8</accession>
<accession>Q7Z5A5</accession>
<dbReference type="EMBL" id="AJ313524">
    <property type="protein sequence ID" value="CAC86408.1"/>
    <property type="molecule type" value="mRNA"/>
</dbReference>
<dbReference type="EMBL" id="AK128850">
    <property type="protein sequence ID" value="BAC87646.1"/>
    <property type="status" value="ALT_INIT"/>
    <property type="molecule type" value="mRNA"/>
</dbReference>
<dbReference type="EMBL" id="AK131400">
    <property type="protein sequence ID" value="BAD18547.1"/>
    <property type="molecule type" value="mRNA"/>
</dbReference>
<dbReference type="EMBL" id="CH236948">
    <property type="protein sequence ID" value="EAL24276.1"/>
    <property type="molecule type" value="Genomic_DNA"/>
</dbReference>
<dbReference type="EMBL" id="AC007001">
    <property type="status" value="NOT_ANNOTATED_CDS"/>
    <property type="molecule type" value="Genomic_DNA"/>
</dbReference>
<dbReference type="EMBL" id="CH471073">
    <property type="protein sequence ID" value="EAW93719.1"/>
    <property type="status" value="ALT_SEQ"/>
    <property type="molecule type" value="Genomic_DNA"/>
</dbReference>
<dbReference type="EMBL" id="BC137090">
    <property type="protein sequence ID" value="AAI37091.1"/>
    <property type="molecule type" value="mRNA"/>
</dbReference>
<dbReference type="CCDS" id="CCDS5369.1"/>
<dbReference type="RefSeq" id="NP_877439.3">
    <property type="nucleotide sequence ID" value="NM_182762.3"/>
</dbReference>
<dbReference type="BioGRID" id="131381">
    <property type="interactions" value="19"/>
</dbReference>
<dbReference type="FunCoup" id="Q6ZN28">
    <property type="interactions" value="1024"/>
</dbReference>
<dbReference type="IntAct" id="Q6ZN28">
    <property type="interactions" value="12"/>
</dbReference>
<dbReference type="MINT" id="Q6ZN28"/>
<dbReference type="STRING" id="9606.ENSP00000383185"/>
<dbReference type="TCDB" id="8.A.240.1.1">
    <property type="family name" value="the metastasis-associated in colon cancer protein 1 (macc1) family"/>
</dbReference>
<dbReference type="iPTMnet" id="Q6ZN28"/>
<dbReference type="PhosphoSitePlus" id="Q6ZN28"/>
<dbReference type="BioMuta" id="MACC1"/>
<dbReference type="DMDM" id="182627616"/>
<dbReference type="jPOST" id="Q6ZN28"/>
<dbReference type="MassIVE" id="Q6ZN28"/>
<dbReference type="PaxDb" id="9606-ENSP00000383185"/>
<dbReference type="PeptideAtlas" id="Q6ZN28"/>
<dbReference type="ProteomicsDB" id="67968"/>
<dbReference type="Pumba" id="Q6ZN28"/>
<dbReference type="Antibodypedia" id="11924">
    <property type="antibodies" value="182 antibodies from 33 providers"/>
</dbReference>
<dbReference type="DNASU" id="346389"/>
<dbReference type="Ensembl" id="ENST00000332878.8">
    <property type="protein sequence ID" value="ENSP00000328410.4"/>
    <property type="gene ID" value="ENSG00000183742.13"/>
</dbReference>
<dbReference type="Ensembl" id="ENST00000400331.10">
    <property type="protein sequence ID" value="ENSP00000383185.3"/>
    <property type="gene ID" value="ENSG00000183742.13"/>
</dbReference>
<dbReference type="Ensembl" id="ENST00000589011.1">
    <property type="protein sequence ID" value="ENSP00000466864.1"/>
    <property type="gene ID" value="ENSG00000183742.13"/>
</dbReference>
<dbReference type="GeneID" id="346389"/>
<dbReference type="KEGG" id="hsa:346389"/>
<dbReference type="MANE-Select" id="ENST00000400331.10">
    <property type="protein sequence ID" value="ENSP00000383185.3"/>
    <property type="RefSeq nucleotide sequence ID" value="NM_182762.4"/>
    <property type="RefSeq protein sequence ID" value="NP_877439.3"/>
</dbReference>
<dbReference type="UCSC" id="uc003sus.5">
    <property type="organism name" value="human"/>
</dbReference>
<dbReference type="AGR" id="HGNC:30215"/>
<dbReference type="CTD" id="346389"/>
<dbReference type="DisGeNET" id="346389"/>
<dbReference type="GeneCards" id="MACC1"/>
<dbReference type="HGNC" id="HGNC:30215">
    <property type="gene designation" value="MACC1"/>
</dbReference>
<dbReference type="HPA" id="ENSG00000183742">
    <property type="expression patterns" value="Tissue enhanced (intestine)"/>
</dbReference>
<dbReference type="MIM" id="612646">
    <property type="type" value="gene"/>
</dbReference>
<dbReference type="neXtProt" id="NX_Q6ZN28"/>
<dbReference type="OpenTargets" id="ENSG00000183742"/>
<dbReference type="PharmGKB" id="PA164722150"/>
<dbReference type="VEuPathDB" id="HostDB:ENSG00000183742"/>
<dbReference type="eggNOG" id="ENOG502QZDM">
    <property type="taxonomic scope" value="Eukaryota"/>
</dbReference>
<dbReference type="GeneTree" id="ENSGT00390000013151"/>
<dbReference type="HOGENOM" id="CLU_013080_1_0_1"/>
<dbReference type="InParanoid" id="Q6ZN28"/>
<dbReference type="OMA" id="PPMLNHD"/>
<dbReference type="OrthoDB" id="10000126at2759"/>
<dbReference type="PAN-GO" id="Q6ZN28">
    <property type="GO annotations" value="1 GO annotation based on evolutionary models"/>
</dbReference>
<dbReference type="PhylomeDB" id="Q6ZN28"/>
<dbReference type="TreeFam" id="TF105572"/>
<dbReference type="PathwayCommons" id="Q6ZN28"/>
<dbReference type="SignaLink" id="Q6ZN28"/>
<dbReference type="SIGNOR" id="Q6ZN28"/>
<dbReference type="BioGRID-ORCS" id="346389">
    <property type="hits" value="14 hits in 1160 CRISPR screens"/>
</dbReference>
<dbReference type="ChiTaRS" id="MACC1">
    <property type="organism name" value="human"/>
</dbReference>
<dbReference type="GenomeRNAi" id="346389"/>
<dbReference type="Pharos" id="Q6ZN28">
    <property type="development level" value="Tbio"/>
</dbReference>
<dbReference type="PRO" id="PR:Q6ZN28"/>
<dbReference type="Proteomes" id="UP000005640">
    <property type="component" value="Chromosome 7"/>
</dbReference>
<dbReference type="RNAct" id="Q6ZN28">
    <property type="molecule type" value="protein"/>
</dbReference>
<dbReference type="Bgee" id="ENSG00000183742">
    <property type="expression patterns" value="Expressed in nasal cavity epithelium and 98 other cell types or tissues"/>
</dbReference>
<dbReference type="GO" id="GO:0005737">
    <property type="term" value="C:cytoplasm"/>
    <property type="evidence" value="ECO:0000318"/>
    <property type="project" value="GO_Central"/>
</dbReference>
<dbReference type="GO" id="GO:0005739">
    <property type="term" value="C:mitochondrion"/>
    <property type="evidence" value="ECO:0000314"/>
    <property type="project" value="HPA"/>
</dbReference>
<dbReference type="GO" id="GO:0005634">
    <property type="term" value="C:nucleus"/>
    <property type="evidence" value="ECO:0007669"/>
    <property type="project" value="UniProtKB-SubCell"/>
</dbReference>
<dbReference type="GO" id="GO:0008083">
    <property type="term" value="F:growth factor activity"/>
    <property type="evidence" value="ECO:0007669"/>
    <property type="project" value="UniProtKB-KW"/>
</dbReference>
<dbReference type="GO" id="GO:0051781">
    <property type="term" value="P:positive regulation of cell division"/>
    <property type="evidence" value="ECO:0007669"/>
    <property type="project" value="UniProtKB-KW"/>
</dbReference>
<dbReference type="GO" id="GO:0045944">
    <property type="term" value="P:positive regulation of transcription by RNA polymerase II"/>
    <property type="evidence" value="ECO:0000314"/>
    <property type="project" value="NTNU_SB"/>
</dbReference>
<dbReference type="CDD" id="cd01670">
    <property type="entry name" value="Death"/>
    <property type="match status" value="1"/>
</dbReference>
<dbReference type="FunFam" id="2.60.220.30:FF:000012">
    <property type="entry name" value="Metastasis-associated in colon cancer 1"/>
    <property type="match status" value="1"/>
</dbReference>
<dbReference type="Gene3D" id="2.60.220.30">
    <property type="match status" value="1"/>
</dbReference>
<dbReference type="InterPro" id="IPR056183">
    <property type="entry name" value="DEATH_SH3BP4"/>
</dbReference>
<dbReference type="InterPro" id="IPR001452">
    <property type="entry name" value="SH3_domain"/>
</dbReference>
<dbReference type="InterPro" id="IPR056181">
    <property type="entry name" value="SH3BP4_C"/>
</dbReference>
<dbReference type="InterPro" id="IPR056182">
    <property type="entry name" value="UPA_SH3BP4"/>
</dbReference>
<dbReference type="InterPro" id="IPR000906">
    <property type="entry name" value="ZU5_dom"/>
</dbReference>
<dbReference type="PANTHER" id="PTHR15603:SF1">
    <property type="entry name" value="METASTASIS-ASSOCIATED IN COLON CANCER PROTEIN 1"/>
    <property type="match status" value="1"/>
</dbReference>
<dbReference type="PANTHER" id="PTHR15603">
    <property type="entry name" value="SH3 DOMAIN-CONTAINING PROTEIN"/>
    <property type="match status" value="1"/>
</dbReference>
<dbReference type="Pfam" id="PF24094">
    <property type="entry name" value="DEATH_SH3BP4"/>
    <property type="match status" value="1"/>
</dbReference>
<dbReference type="Pfam" id="PF23637">
    <property type="entry name" value="SH3BP4_C"/>
    <property type="match status" value="1"/>
</dbReference>
<dbReference type="Pfam" id="PF23640">
    <property type="entry name" value="UPA_SH3BP4"/>
    <property type="match status" value="1"/>
</dbReference>
<dbReference type="PROSITE" id="PS50002">
    <property type="entry name" value="SH3"/>
    <property type="match status" value="1"/>
</dbReference>
<dbReference type="PROSITE" id="PS51145">
    <property type="entry name" value="ZU5"/>
    <property type="match status" value="1"/>
</dbReference>